<proteinExistence type="inferred from homology"/>
<name>NDK_METB6</name>
<organism>
    <name type="scientific">Methanoregula boonei (strain DSM 21154 / JCM 14090 / 6A8)</name>
    <dbReference type="NCBI Taxonomy" id="456442"/>
    <lineage>
        <taxon>Archaea</taxon>
        <taxon>Methanobacteriati</taxon>
        <taxon>Methanobacteriota</taxon>
        <taxon>Stenosarchaea group</taxon>
        <taxon>Methanomicrobia</taxon>
        <taxon>Methanomicrobiales</taxon>
        <taxon>Methanoregulaceae</taxon>
        <taxon>Methanoregula</taxon>
    </lineage>
</organism>
<reference key="1">
    <citation type="journal article" date="2015" name="Microbiology">
        <title>Genome of Methanoregula boonei 6A8 reveals adaptations to oligotrophic peatland environments.</title>
        <authorList>
            <person name="Braeuer S."/>
            <person name="Cadillo-Quiroz H."/>
            <person name="Kyrpides N."/>
            <person name="Woyke T."/>
            <person name="Goodwin L."/>
            <person name="Detter C."/>
            <person name="Podell S."/>
            <person name="Yavitt J.B."/>
            <person name="Zinder S.H."/>
        </authorList>
    </citation>
    <scope>NUCLEOTIDE SEQUENCE [LARGE SCALE GENOMIC DNA]</scope>
    <source>
        <strain>DSM 21154 / JCM 14090 / 6A8</strain>
    </source>
</reference>
<evidence type="ECO:0000255" key="1">
    <source>
        <dbReference type="HAMAP-Rule" id="MF_00451"/>
    </source>
</evidence>
<keyword id="KW-0067">ATP-binding</keyword>
<keyword id="KW-0963">Cytoplasm</keyword>
<keyword id="KW-0418">Kinase</keyword>
<keyword id="KW-0460">Magnesium</keyword>
<keyword id="KW-0479">Metal-binding</keyword>
<keyword id="KW-0546">Nucleotide metabolism</keyword>
<keyword id="KW-0547">Nucleotide-binding</keyword>
<keyword id="KW-0597">Phosphoprotein</keyword>
<keyword id="KW-1185">Reference proteome</keyword>
<keyword id="KW-0808">Transferase</keyword>
<comment type="function">
    <text evidence="1">Major role in the synthesis of nucleoside triphosphates other than ATP. The ATP gamma phosphate is transferred to the NDP beta phosphate via a ping-pong mechanism, using a phosphorylated active-site intermediate.</text>
</comment>
<comment type="catalytic activity">
    <reaction evidence="1">
        <text>a 2'-deoxyribonucleoside 5'-diphosphate + ATP = a 2'-deoxyribonucleoside 5'-triphosphate + ADP</text>
        <dbReference type="Rhea" id="RHEA:44640"/>
        <dbReference type="ChEBI" id="CHEBI:30616"/>
        <dbReference type="ChEBI" id="CHEBI:61560"/>
        <dbReference type="ChEBI" id="CHEBI:73316"/>
        <dbReference type="ChEBI" id="CHEBI:456216"/>
        <dbReference type="EC" id="2.7.4.6"/>
    </reaction>
</comment>
<comment type="catalytic activity">
    <reaction evidence="1">
        <text>a ribonucleoside 5'-diphosphate + ATP = a ribonucleoside 5'-triphosphate + ADP</text>
        <dbReference type="Rhea" id="RHEA:18113"/>
        <dbReference type="ChEBI" id="CHEBI:30616"/>
        <dbReference type="ChEBI" id="CHEBI:57930"/>
        <dbReference type="ChEBI" id="CHEBI:61557"/>
        <dbReference type="ChEBI" id="CHEBI:456216"/>
        <dbReference type="EC" id="2.7.4.6"/>
    </reaction>
</comment>
<comment type="cofactor">
    <cofactor evidence="1">
        <name>Mg(2+)</name>
        <dbReference type="ChEBI" id="CHEBI:18420"/>
    </cofactor>
</comment>
<comment type="subcellular location">
    <subcellularLocation>
        <location evidence="1">Cytoplasm</location>
    </subcellularLocation>
</comment>
<comment type="similarity">
    <text evidence="1">Belongs to the NDK family.</text>
</comment>
<dbReference type="EC" id="2.7.4.6" evidence="1"/>
<dbReference type="EMBL" id="CP000780">
    <property type="protein sequence ID" value="ABS55205.1"/>
    <property type="molecule type" value="Genomic_DNA"/>
</dbReference>
<dbReference type="RefSeq" id="WP_012106227.1">
    <property type="nucleotide sequence ID" value="NC_009712.1"/>
</dbReference>
<dbReference type="SMR" id="A7I644"/>
<dbReference type="STRING" id="456442.Mboo_0687"/>
<dbReference type="GeneID" id="5411663"/>
<dbReference type="KEGG" id="mbn:Mboo_0687"/>
<dbReference type="eggNOG" id="arCOG04313">
    <property type="taxonomic scope" value="Archaea"/>
</dbReference>
<dbReference type="HOGENOM" id="CLU_060216_6_3_2"/>
<dbReference type="OrthoDB" id="6874at2157"/>
<dbReference type="Proteomes" id="UP000002408">
    <property type="component" value="Chromosome"/>
</dbReference>
<dbReference type="GO" id="GO:0005737">
    <property type="term" value="C:cytoplasm"/>
    <property type="evidence" value="ECO:0007669"/>
    <property type="project" value="UniProtKB-SubCell"/>
</dbReference>
<dbReference type="GO" id="GO:0005524">
    <property type="term" value="F:ATP binding"/>
    <property type="evidence" value="ECO:0007669"/>
    <property type="project" value="UniProtKB-UniRule"/>
</dbReference>
<dbReference type="GO" id="GO:0046872">
    <property type="term" value="F:metal ion binding"/>
    <property type="evidence" value="ECO:0007669"/>
    <property type="project" value="UniProtKB-KW"/>
</dbReference>
<dbReference type="GO" id="GO:0004550">
    <property type="term" value="F:nucleoside diphosphate kinase activity"/>
    <property type="evidence" value="ECO:0007669"/>
    <property type="project" value="UniProtKB-UniRule"/>
</dbReference>
<dbReference type="GO" id="GO:0006241">
    <property type="term" value="P:CTP biosynthetic process"/>
    <property type="evidence" value="ECO:0007669"/>
    <property type="project" value="UniProtKB-UniRule"/>
</dbReference>
<dbReference type="GO" id="GO:0006183">
    <property type="term" value="P:GTP biosynthetic process"/>
    <property type="evidence" value="ECO:0007669"/>
    <property type="project" value="UniProtKB-UniRule"/>
</dbReference>
<dbReference type="GO" id="GO:0006228">
    <property type="term" value="P:UTP biosynthetic process"/>
    <property type="evidence" value="ECO:0007669"/>
    <property type="project" value="UniProtKB-UniRule"/>
</dbReference>
<dbReference type="CDD" id="cd04413">
    <property type="entry name" value="NDPk_I"/>
    <property type="match status" value="1"/>
</dbReference>
<dbReference type="FunFam" id="3.30.70.141:FF:000002">
    <property type="entry name" value="Nucleoside diphosphate kinase"/>
    <property type="match status" value="1"/>
</dbReference>
<dbReference type="Gene3D" id="3.30.70.141">
    <property type="entry name" value="Nucleoside diphosphate kinase-like domain"/>
    <property type="match status" value="1"/>
</dbReference>
<dbReference type="HAMAP" id="MF_00451">
    <property type="entry name" value="NDP_kinase"/>
    <property type="match status" value="1"/>
</dbReference>
<dbReference type="InterPro" id="IPR034907">
    <property type="entry name" value="NDK-like_dom"/>
</dbReference>
<dbReference type="InterPro" id="IPR036850">
    <property type="entry name" value="NDK-like_dom_sf"/>
</dbReference>
<dbReference type="InterPro" id="IPR001564">
    <property type="entry name" value="Nucleoside_diP_kinase"/>
</dbReference>
<dbReference type="InterPro" id="IPR023005">
    <property type="entry name" value="Nucleoside_diP_kinase_AS"/>
</dbReference>
<dbReference type="NCBIfam" id="NF001908">
    <property type="entry name" value="PRK00668.1"/>
    <property type="match status" value="1"/>
</dbReference>
<dbReference type="PANTHER" id="PTHR11349">
    <property type="entry name" value="NUCLEOSIDE DIPHOSPHATE KINASE"/>
    <property type="match status" value="1"/>
</dbReference>
<dbReference type="Pfam" id="PF00334">
    <property type="entry name" value="NDK"/>
    <property type="match status" value="1"/>
</dbReference>
<dbReference type="PRINTS" id="PR01243">
    <property type="entry name" value="NUCDPKINASE"/>
</dbReference>
<dbReference type="SMART" id="SM00562">
    <property type="entry name" value="NDK"/>
    <property type="match status" value="1"/>
</dbReference>
<dbReference type="SUPFAM" id="SSF54919">
    <property type="entry name" value="Nucleoside diphosphate kinase, NDK"/>
    <property type="match status" value="1"/>
</dbReference>
<dbReference type="PROSITE" id="PS00469">
    <property type="entry name" value="NDPK"/>
    <property type="match status" value="1"/>
</dbReference>
<dbReference type="PROSITE" id="PS51374">
    <property type="entry name" value="NDPK_LIKE"/>
    <property type="match status" value="1"/>
</dbReference>
<gene>
    <name evidence="1" type="primary">ndk</name>
    <name type="ordered locus">Mboo_0687</name>
</gene>
<accession>A7I644</accession>
<feature type="chain" id="PRO_1000026249" description="Nucleoside diphosphate kinase">
    <location>
        <begin position="1"/>
        <end position="150"/>
    </location>
</feature>
<feature type="active site" description="Pros-phosphohistidine intermediate" evidence="1">
    <location>
        <position position="115"/>
    </location>
</feature>
<feature type="binding site" evidence="1">
    <location>
        <position position="9"/>
    </location>
    <ligand>
        <name>ATP</name>
        <dbReference type="ChEBI" id="CHEBI:30616"/>
    </ligand>
</feature>
<feature type="binding site" evidence="1">
    <location>
        <position position="57"/>
    </location>
    <ligand>
        <name>ATP</name>
        <dbReference type="ChEBI" id="CHEBI:30616"/>
    </ligand>
</feature>
<feature type="binding site" evidence="1">
    <location>
        <position position="85"/>
    </location>
    <ligand>
        <name>ATP</name>
        <dbReference type="ChEBI" id="CHEBI:30616"/>
    </ligand>
</feature>
<feature type="binding site" evidence="1">
    <location>
        <position position="91"/>
    </location>
    <ligand>
        <name>ATP</name>
        <dbReference type="ChEBI" id="CHEBI:30616"/>
    </ligand>
</feature>
<feature type="binding site" evidence="1">
    <location>
        <position position="102"/>
    </location>
    <ligand>
        <name>ATP</name>
        <dbReference type="ChEBI" id="CHEBI:30616"/>
    </ligand>
</feature>
<feature type="binding site" evidence="1">
    <location>
        <position position="112"/>
    </location>
    <ligand>
        <name>ATP</name>
        <dbReference type="ChEBI" id="CHEBI:30616"/>
    </ligand>
</feature>
<sequence length="150" mass="16729">MDRTFVMIKPDGVQRGQVGGIVSRFEAKGLKLVAARFEVLPESRVIEQYQEHLSKPFFPSLKSYIRGGPCFLMVWEGRNVVAIVRKMIGATNPQEAAPGTIRGDFGIDIGRNVIHASDSPESAAREIGIHFKPAELFAYTRVDESVVYEY</sequence>
<protein>
    <recommendedName>
        <fullName evidence="1">Nucleoside diphosphate kinase</fullName>
        <shortName evidence="1">NDK</shortName>
        <shortName evidence="1">NDP kinase</shortName>
        <ecNumber evidence="1">2.7.4.6</ecNumber>
    </recommendedName>
    <alternativeName>
        <fullName evidence="1">Nucleoside-2-P kinase</fullName>
    </alternativeName>
</protein>